<proteinExistence type="inferred from homology"/>
<organism>
    <name type="scientific">Staphylococcus aureus (strain MW2)</name>
    <dbReference type="NCBI Taxonomy" id="196620"/>
    <lineage>
        <taxon>Bacteria</taxon>
        <taxon>Bacillati</taxon>
        <taxon>Bacillota</taxon>
        <taxon>Bacilli</taxon>
        <taxon>Bacillales</taxon>
        <taxon>Staphylococcaceae</taxon>
        <taxon>Staphylococcus</taxon>
    </lineage>
</organism>
<gene>
    <name evidence="1" type="primary">ureC</name>
    <name type="ordered locus">MW2208</name>
</gene>
<comment type="catalytic activity">
    <reaction evidence="1">
        <text>urea + 2 H2O + H(+) = hydrogencarbonate + 2 NH4(+)</text>
        <dbReference type="Rhea" id="RHEA:20557"/>
        <dbReference type="ChEBI" id="CHEBI:15377"/>
        <dbReference type="ChEBI" id="CHEBI:15378"/>
        <dbReference type="ChEBI" id="CHEBI:16199"/>
        <dbReference type="ChEBI" id="CHEBI:17544"/>
        <dbReference type="ChEBI" id="CHEBI:28938"/>
        <dbReference type="EC" id="3.5.1.5"/>
    </reaction>
</comment>
<comment type="cofactor">
    <cofactor evidence="1">
        <name>Ni cation</name>
        <dbReference type="ChEBI" id="CHEBI:25516"/>
    </cofactor>
    <text evidence="1">Binds 2 nickel ions per subunit.</text>
</comment>
<comment type="pathway">
    <text evidence="1">Nitrogen metabolism; urea degradation; CO(2) and NH(3) from urea (urease route): step 1/1.</text>
</comment>
<comment type="subunit">
    <text evidence="1">Heterotrimer of UreA (gamma), UreB (beta) and UreC (alpha) subunits. Three heterotrimers associate to form the active enzyme.</text>
</comment>
<comment type="subcellular location">
    <subcellularLocation>
        <location evidence="1">Cytoplasm</location>
    </subcellularLocation>
</comment>
<comment type="PTM">
    <text evidence="1">Carboxylation allows a single lysine to coordinate two nickel ions.</text>
</comment>
<comment type="similarity">
    <text evidence="1">Belongs to the metallo-dependent hydrolases superfamily. Urease alpha subunit family.</text>
</comment>
<feature type="chain" id="PRO_0000067557" description="Urease subunit alpha">
    <location>
        <begin position="1"/>
        <end position="571"/>
    </location>
</feature>
<feature type="domain" description="Urease" evidence="1">
    <location>
        <begin position="133"/>
        <end position="571"/>
    </location>
</feature>
<feature type="active site" description="Proton donor" evidence="1">
    <location>
        <position position="324"/>
    </location>
</feature>
<feature type="binding site" evidence="1">
    <location>
        <position position="138"/>
    </location>
    <ligand>
        <name>Ni(2+)</name>
        <dbReference type="ChEBI" id="CHEBI:49786"/>
        <label>1</label>
    </ligand>
</feature>
<feature type="binding site" evidence="1">
    <location>
        <position position="140"/>
    </location>
    <ligand>
        <name>Ni(2+)</name>
        <dbReference type="ChEBI" id="CHEBI:49786"/>
        <label>1</label>
    </ligand>
</feature>
<feature type="binding site" description="via carbamate group" evidence="1">
    <location>
        <position position="221"/>
    </location>
    <ligand>
        <name>Ni(2+)</name>
        <dbReference type="ChEBI" id="CHEBI:49786"/>
        <label>1</label>
    </ligand>
</feature>
<feature type="binding site" description="via carbamate group" evidence="1">
    <location>
        <position position="221"/>
    </location>
    <ligand>
        <name>Ni(2+)</name>
        <dbReference type="ChEBI" id="CHEBI:49786"/>
        <label>2</label>
    </ligand>
</feature>
<feature type="binding site" evidence="1">
    <location>
        <position position="223"/>
    </location>
    <ligand>
        <name>substrate</name>
    </ligand>
</feature>
<feature type="binding site" evidence="1">
    <location>
        <position position="250"/>
    </location>
    <ligand>
        <name>Ni(2+)</name>
        <dbReference type="ChEBI" id="CHEBI:49786"/>
        <label>2</label>
    </ligand>
</feature>
<feature type="binding site" evidence="1">
    <location>
        <position position="276"/>
    </location>
    <ligand>
        <name>Ni(2+)</name>
        <dbReference type="ChEBI" id="CHEBI:49786"/>
        <label>2</label>
    </ligand>
</feature>
<feature type="binding site" evidence="1">
    <location>
        <position position="364"/>
    </location>
    <ligand>
        <name>Ni(2+)</name>
        <dbReference type="ChEBI" id="CHEBI:49786"/>
        <label>1</label>
    </ligand>
</feature>
<feature type="modified residue" description="N6-carboxylysine" evidence="1">
    <location>
        <position position="221"/>
    </location>
</feature>
<protein>
    <recommendedName>
        <fullName evidence="1">Urease subunit alpha</fullName>
        <ecNumber evidence="1">3.5.1.5</ecNumber>
    </recommendedName>
    <alternativeName>
        <fullName evidence="1">Urea amidohydrolase subunit alpha</fullName>
    </alternativeName>
</protein>
<accession>P67405</accession>
<accession>Q99RY2</accession>
<reference key="1">
    <citation type="journal article" date="2002" name="Lancet">
        <title>Genome and virulence determinants of high virulence community-acquired MRSA.</title>
        <authorList>
            <person name="Baba T."/>
            <person name="Takeuchi F."/>
            <person name="Kuroda M."/>
            <person name="Yuzawa H."/>
            <person name="Aoki K."/>
            <person name="Oguchi A."/>
            <person name="Nagai Y."/>
            <person name="Iwama N."/>
            <person name="Asano K."/>
            <person name="Naimi T."/>
            <person name="Kuroda H."/>
            <person name="Cui L."/>
            <person name="Yamamoto K."/>
            <person name="Hiramatsu K."/>
        </authorList>
    </citation>
    <scope>NUCLEOTIDE SEQUENCE [LARGE SCALE GENOMIC DNA]</scope>
    <source>
        <strain>MW2</strain>
    </source>
</reference>
<dbReference type="EC" id="3.5.1.5" evidence="1"/>
<dbReference type="EMBL" id="BA000033">
    <property type="protein sequence ID" value="BAB96073.1"/>
    <property type="molecule type" value="Genomic_DNA"/>
</dbReference>
<dbReference type="RefSeq" id="WP_000008673.1">
    <property type="nucleotide sequence ID" value="NC_003923.1"/>
</dbReference>
<dbReference type="SMR" id="P67405"/>
<dbReference type="KEGG" id="sam:MW2208"/>
<dbReference type="HOGENOM" id="CLU_000980_0_0_9"/>
<dbReference type="UniPathway" id="UPA00258">
    <property type="reaction ID" value="UER00370"/>
</dbReference>
<dbReference type="GO" id="GO:0005737">
    <property type="term" value="C:cytoplasm"/>
    <property type="evidence" value="ECO:0007669"/>
    <property type="project" value="UniProtKB-SubCell"/>
</dbReference>
<dbReference type="GO" id="GO:0016151">
    <property type="term" value="F:nickel cation binding"/>
    <property type="evidence" value="ECO:0007669"/>
    <property type="project" value="UniProtKB-UniRule"/>
</dbReference>
<dbReference type="GO" id="GO:0009039">
    <property type="term" value="F:urease activity"/>
    <property type="evidence" value="ECO:0007669"/>
    <property type="project" value="UniProtKB-UniRule"/>
</dbReference>
<dbReference type="GO" id="GO:0043419">
    <property type="term" value="P:urea catabolic process"/>
    <property type="evidence" value="ECO:0007669"/>
    <property type="project" value="UniProtKB-UniRule"/>
</dbReference>
<dbReference type="CDD" id="cd00375">
    <property type="entry name" value="Urease_alpha"/>
    <property type="match status" value="1"/>
</dbReference>
<dbReference type="Gene3D" id="3.20.20.140">
    <property type="entry name" value="Metal-dependent hydrolases"/>
    <property type="match status" value="1"/>
</dbReference>
<dbReference type="Gene3D" id="2.30.40.10">
    <property type="entry name" value="Urease, subunit C, domain 1"/>
    <property type="match status" value="1"/>
</dbReference>
<dbReference type="HAMAP" id="MF_01953">
    <property type="entry name" value="Urease_alpha"/>
    <property type="match status" value="1"/>
</dbReference>
<dbReference type="InterPro" id="IPR006680">
    <property type="entry name" value="Amidohydro-rel"/>
</dbReference>
<dbReference type="InterPro" id="IPR011059">
    <property type="entry name" value="Metal-dep_hydrolase_composite"/>
</dbReference>
<dbReference type="InterPro" id="IPR032466">
    <property type="entry name" value="Metal_Hydrolase"/>
</dbReference>
<dbReference type="InterPro" id="IPR011612">
    <property type="entry name" value="Urease_alpha_N_dom"/>
</dbReference>
<dbReference type="InterPro" id="IPR050112">
    <property type="entry name" value="Urease_alpha_subunit"/>
</dbReference>
<dbReference type="InterPro" id="IPR017950">
    <property type="entry name" value="Urease_AS"/>
</dbReference>
<dbReference type="InterPro" id="IPR005848">
    <property type="entry name" value="Urease_asu"/>
</dbReference>
<dbReference type="InterPro" id="IPR017951">
    <property type="entry name" value="Urease_asu_c"/>
</dbReference>
<dbReference type="InterPro" id="IPR029754">
    <property type="entry name" value="Urease_Ni-bd"/>
</dbReference>
<dbReference type="NCBIfam" id="NF009686">
    <property type="entry name" value="PRK13207.1"/>
    <property type="match status" value="1"/>
</dbReference>
<dbReference type="NCBIfam" id="TIGR01792">
    <property type="entry name" value="urease_alph"/>
    <property type="match status" value="1"/>
</dbReference>
<dbReference type="PANTHER" id="PTHR43440">
    <property type="entry name" value="UREASE"/>
    <property type="match status" value="1"/>
</dbReference>
<dbReference type="PANTHER" id="PTHR43440:SF1">
    <property type="entry name" value="UREASE"/>
    <property type="match status" value="1"/>
</dbReference>
<dbReference type="Pfam" id="PF01979">
    <property type="entry name" value="Amidohydro_1"/>
    <property type="match status" value="1"/>
</dbReference>
<dbReference type="Pfam" id="PF00449">
    <property type="entry name" value="Urease_alpha"/>
    <property type="match status" value="1"/>
</dbReference>
<dbReference type="PRINTS" id="PR01752">
    <property type="entry name" value="UREASE"/>
</dbReference>
<dbReference type="SUPFAM" id="SSF51338">
    <property type="entry name" value="Composite domain of metallo-dependent hydrolases"/>
    <property type="match status" value="1"/>
</dbReference>
<dbReference type="SUPFAM" id="SSF51556">
    <property type="entry name" value="Metallo-dependent hydrolases"/>
    <property type="match status" value="1"/>
</dbReference>
<dbReference type="PROSITE" id="PS01120">
    <property type="entry name" value="UREASE_1"/>
    <property type="match status" value="1"/>
</dbReference>
<dbReference type="PROSITE" id="PS00145">
    <property type="entry name" value="UREASE_2"/>
    <property type="match status" value="1"/>
</dbReference>
<dbReference type="PROSITE" id="PS51368">
    <property type="entry name" value="UREASE_3"/>
    <property type="match status" value="1"/>
</dbReference>
<evidence type="ECO:0000255" key="1">
    <source>
        <dbReference type="HAMAP-Rule" id="MF_01953"/>
    </source>
</evidence>
<name>URE1_STAAW</name>
<sequence>MSFKMTQNQYTSLYGPTVGDSIRLGDTNLFAQIEKDYAVYGEEATFGGGKSIRDGMAQNPRVTRDDVNVADLVISNAVIIDYDKVVKADIGIKNGYIFAIGNAGNPDIMDNVDIIIGSTTDIIAAEGKIVTAGGIDTHVHFINPEQAEVALESGITTHIGGGTGASEGSKATTVTPGPWHIHRMLEAAEGLPINVGFTGKGQATNPTALIEQINAGAIGLKVHEDWGATPSALSHALDVADEFDVQIALHADTLNEAGFMEDTMAAVKDRVLHMYHTEGAGGGHAPDLIKSAAFSNILPSSTNPTLPYTHNTVDEHLDMVMITHHLNAAIPEDIAFADSRIRKETIAAEDVLQDMGVFSMISSDSQAMGRVGEVITRTWQVAHRMKEQRGPLDGDFEHNDNNRIKRYIAKYTINPAITHGISEYVGSIEPGKLADIVLWDPIFFGVKPELVVKGGLINSAVNGDANGSIPTSEPMKYRKMYGQYGGNLTSTSMTFVSKTAYENGINRALNLKRMVRPVKNIRQLSKADMKNNSATPKLDVDPQTYEVYVDGEKITSNAATELPLTQRYFLF</sequence>
<keyword id="KW-0963">Cytoplasm</keyword>
<keyword id="KW-0378">Hydrolase</keyword>
<keyword id="KW-0479">Metal-binding</keyword>
<keyword id="KW-0533">Nickel</keyword>